<keyword id="KW-0067">ATP-binding</keyword>
<keyword id="KW-0378">Hydrolase</keyword>
<keyword id="KW-0547">Nucleotide-binding</keyword>
<keyword id="KW-1185">Reference proteome</keyword>
<comment type="function">
    <text evidence="1">Has nucleotide phosphatase activity towards ATP, GTP, CTP, TTP and UTP. May hydrolyze nucleoside diphosphates with lower efficiency (By similarity).</text>
</comment>
<comment type="catalytic activity">
    <reaction>
        <text>a ribonucleoside 5'-triphosphate + H2O = a ribonucleoside 5'-diphosphate + phosphate + H(+)</text>
        <dbReference type="Rhea" id="RHEA:23680"/>
        <dbReference type="ChEBI" id="CHEBI:15377"/>
        <dbReference type="ChEBI" id="CHEBI:15378"/>
        <dbReference type="ChEBI" id="CHEBI:43474"/>
        <dbReference type="ChEBI" id="CHEBI:57930"/>
        <dbReference type="ChEBI" id="CHEBI:61557"/>
        <dbReference type="EC" id="3.6.1.15"/>
    </reaction>
</comment>
<comment type="similarity">
    <text evidence="2">Belongs to the THEP1 NTPase family.</text>
</comment>
<comment type="sequence caution" evidence="2">
    <conflict type="erroneous initiation">
        <sequence resource="EMBL-CDS" id="AAB99578"/>
    </conflict>
</comment>
<gene>
    <name type="ordered locus">MJ1559</name>
</gene>
<proteinExistence type="inferred from homology"/>
<accession>Q58954</accession>
<sequence length="170" mass="19088">MRIFITGMPGVGKTTLALKIAEKLKELGYKVGGFITKEIRDGGKRVGFKIITLDTNEETILAYVGDGKIKVGKYAVFIENLDNVGVEAIKRALKDADIIIIDELGAMEFKSRKFSEVVDEVIKSDKPLLATLHRNWVNKFKDKGELYTLTIENREKLFEEILNKILAGLK</sequence>
<feature type="chain" id="PRO_0000146696" description="Nucleoside-triphosphatase THEP1">
    <location>
        <begin position="1"/>
        <end position="170"/>
    </location>
</feature>
<feature type="binding site" evidence="1">
    <location>
        <begin position="7"/>
        <end position="14"/>
    </location>
    <ligand>
        <name>ATP</name>
        <dbReference type="ChEBI" id="CHEBI:30616"/>
    </ligand>
</feature>
<feature type="binding site" evidence="1">
    <location>
        <begin position="98"/>
        <end position="105"/>
    </location>
    <ligand>
        <name>ATP</name>
        <dbReference type="ChEBI" id="CHEBI:30616"/>
    </ligand>
</feature>
<reference key="1">
    <citation type="journal article" date="1996" name="Science">
        <title>Complete genome sequence of the methanogenic archaeon, Methanococcus jannaschii.</title>
        <authorList>
            <person name="Bult C.J."/>
            <person name="White O."/>
            <person name="Olsen G.J."/>
            <person name="Zhou L."/>
            <person name="Fleischmann R.D."/>
            <person name="Sutton G.G."/>
            <person name="Blake J.A."/>
            <person name="FitzGerald L.M."/>
            <person name="Clayton R.A."/>
            <person name="Gocayne J.D."/>
            <person name="Kerlavage A.R."/>
            <person name="Dougherty B.A."/>
            <person name="Tomb J.-F."/>
            <person name="Adams M.D."/>
            <person name="Reich C.I."/>
            <person name="Overbeek R."/>
            <person name="Kirkness E.F."/>
            <person name="Weinstock K.G."/>
            <person name="Merrick J.M."/>
            <person name="Glodek A."/>
            <person name="Scott J.L."/>
            <person name="Geoghagen N.S.M."/>
            <person name="Weidman J.F."/>
            <person name="Fuhrmann J.L."/>
            <person name="Nguyen D."/>
            <person name="Utterback T.R."/>
            <person name="Kelley J.M."/>
            <person name="Peterson J.D."/>
            <person name="Sadow P.W."/>
            <person name="Hanna M.C."/>
            <person name="Cotton M.D."/>
            <person name="Roberts K.M."/>
            <person name="Hurst M.A."/>
            <person name="Kaine B.P."/>
            <person name="Borodovsky M."/>
            <person name="Klenk H.-P."/>
            <person name="Fraser C.M."/>
            <person name="Smith H.O."/>
            <person name="Woese C.R."/>
            <person name="Venter J.C."/>
        </authorList>
    </citation>
    <scope>NUCLEOTIDE SEQUENCE [LARGE SCALE GENOMIC DNA]</scope>
    <source>
        <strain>ATCC 43067 / DSM 2661 / JAL-1 / JCM 10045 / NBRC 100440</strain>
    </source>
</reference>
<evidence type="ECO:0000250" key="1"/>
<evidence type="ECO:0000305" key="2"/>
<protein>
    <recommendedName>
        <fullName>Nucleoside-triphosphatase THEP1</fullName>
        <shortName>NTPase THEP1</shortName>
        <ecNumber>3.6.1.15</ecNumber>
    </recommendedName>
    <alternativeName>
        <fullName>Nucleoside triphosphate phosphohydrolase</fullName>
    </alternativeName>
</protein>
<name>NTPTH_METJA</name>
<organism>
    <name type="scientific">Methanocaldococcus jannaschii (strain ATCC 43067 / DSM 2661 / JAL-1 / JCM 10045 / NBRC 100440)</name>
    <name type="common">Methanococcus jannaschii</name>
    <dbReference type="NCBI Taxonomy" id="243232"/>
    <lineage>
        <taxon>Archaea</taxon>
        <taxon>Methanobacteriati</taxon>
        <taxon>Methanobacteriota</taxon>
        <taxon>Methanomada group</taxon>
        <taxon>Methanococci</taxon>
        <taxon>Methanococcales</taxon>
        <taxon>Methanocaldococcaceae</taxon>
        <taxon>Methanocaldococcus</taxon>
    </lineage>
</organism>
<dbReference type="EC" id="3.6.1.15"/>
<dbReference type="EMBL" id="L77117">
    <property type="protein sequence ID" value="AAB99578.1"/>
    <property type="status" value="ALT_INIT"/>
    <property type="molecule type" value="Genomic_DNA"/>
</dbReference>
<dbReference type="PIR" id="F64494">
    <property type="entry name" value="F64494"/>
</dbReference>
<dbReference type="SMR" id="Q58954"/>
<dbReference type="FunCoup" id="Q58954">
    <property type="interactions" value="103"/>
</dbReference>
<dbReference type="STRING" id="243232.MJ_1559"/>
<dbReference type="PaxDb" id="243232-MJ_1559"/>
<dbReference type="EnsemblBacteria" id="AAB99578">
    <property type="protein sequence ID" value="AAB99578"/>
    <property type="gene ID" value="MJ_1559"/>
</dbReference>
<dbReference type="KEGG" id="mja:MJ_1559"/>
<dbReference type="eggNOG" id="arCOG01034">
    <property type="taxonomic scope" value="Archaea"/>
</dbReference>
<dbReference type="HOGENOM" id="CLU_103145_1_1_2"/>
<dbReference type="InParanoid" id="Q58954"/>
<dbReference type="PhylomeDB" id="Q58954"/>
<dbReference type="Proteomes" id="UP000000805">
    <property type="component" value="Chromosome"/>
</dbReference>
<dbReference type="GO" id="GO:0005524">
    <property type="term" value="F:ATP binding"/>
    <property type="evidence" value="ECO:0007669"/>
    <property type="project" value="UniProtKB-UniRule"/>
</dbReference>
<dbReference type="GO" id="GO:0016887">
    <property type="term" value="F:ATP hydrolysis activity"/>
    <property type="evidence" value="ECO:0007669"/>
    <property type="project" value="InterPro"/>
</dbReference>
<dbReference type="CDD" id="cd19482">
    <property type="entry name" value="RecA-like_Thep1"/>
    <property type="match status" value="1"/>
</dbReference>
<dbReference type="Gene3D" id="3.40.50.300">
    <property type="entry name" value="P-loop containing nucleotide triphosphate hydrolases"/>
    <property type="match status" value="1"/>
</dbReference>
<dbReference type="HAMAP" id="MF_00796">
    <property type="entry name" value="NTPase_1"/>
    <property type="match status" value="1"/>
</dbReference>
<dbReference type="InterPro" id="IPR003593">
    <property type="entry name" value="AAA+_ATPase"/>
</dbReference>
<dbReference type="InterPro" id="IPR004948">
    <property type="entry name" value="Nuc-triphosphatase_THEP1"/>
</dbReference>
<dbReference type="InterPro" id="IPR027417">
    <property type="entry name" value="P-loop_NTPase"/>
</dbReference>
<dbReference type="NCBIfam" id="NF010248">
    <property type="entry name" value="PRK13695.1"/>
    <property type="match status" value="1"/>
</dbReference>
<dbReference type="PANTHER" id="PTHR43146">
    <property type="entry name" value="CANCER-RELATED NUCLEOSIDE-TRIPHOSPHATASE"/>
    <property type="match status" value="1"/>
</dbReference>
<dbReference type="PANTHER" id="PTHR43146:SF1">
    <property type="entry name" value="CANCER-RELATED NUCLEOSIDE-TRIPHOSPHATASE"/>
    <property type="match status" value="1"/>
</dbReference>
<dbReference type="Pfam" id="PF03266">
    <property type="entry name" value="NTPase_1"/>
    <property type="match status" value="1"/>
</dbReference>
<dbReference type="SMART" id="SM00382">
    <property type="entry name" value="AAA"/>
    <property type="match status" value="1"/>
</dbReference>
<dbReference type="SUPFAM" id="SSF52540">
    <property type="entry name" value="P-loop containing nucleoside triphosphate hydrolases"/>
    <property type="match status" value="1"/>
</dbReference>